<reference key="1">
    <citation type="journal article" date="2000" name="Nature">
        <title>The genome sequence of the thermoacidophilic scavenger Thermoplasma acidophilum.</title>
        <authorList>
            <person name="Ruepp A."/>
            <person name="Graml W."/>
            <person name="Santos-Martinez M.-L."/>
            <person name="Koretke K.K."/>
            <person name="Volker C."/>
            <person name="Mewes H.-W."/>
            <person name="Frishman D."/>
            <person name="Stocker S."/>
            <person name="Lupas A.N."/>
            <person name="Baumeister W."/>
        </authorList>
    </citation>
    <scope>NUCLEOTIDE SEQUENCE [LARGE SCALE GENOMIC DNA]</scope>
    <source>
        <strain>ATCC 25905 / DSM 1728 / JCM 9062 / NBRC 15155 / AMRC-C165</strain>
    </source>
</reference>
<reference key="2">
    <citation type="journal article" date="2014" name="Biochemistry">
        <title>Evidence of a novel mevalonate pathway in archaea.</title>
        <authorList>
            <person name="Vinokur J.M."/>
            <person name="Korman T.P."/>
            <person name="Cao Z."/>
            <person name="Bowie J.U."/>
        </authorList>
    </citation>
    <scope>FUNCTION</scope>
    <scope>CATALYTIC ACTIVITY</scope>
    <scope>BIOPHYSICOCHEMICAL PROPERTIES</scope>
    <scope>PATHWAY</scope>
    <source>
        <strain>ATCC 25905 / DSM 1728 / JCM 9062 / NBRC 15155 / AMRC-C165</strain>
    </source>
</reference>
<reference key="3">
    <citation type="journal article" date="2014" name="J. Biol. Chem.">
        <title>(R)-mevalonate 3-phosphate is an intermediate of the mevalonate pathway in Thermoplasma acidophilum.</title>
        <authorList>
            <person name="Azami Y."/>
            <person name="Hattori A."/>
            <person name="Nishimura H."/>
            <person name="Kawaide H."/>
            <person name="Yoshimura T."/>
            <person name="Hemmi H."/>
        </authorList>
    </citation>
    <scope>FUNCTION</scope>
    <scope>CATALYTIC ACTIVITY</scope>
    <scope>PATHWAY</scope>
</reference>
<reference key="4">
    <citation type="journal article" date="2015" name="Protein Sci.">
        <title>Structural analysis of mevalonate-3-kinase provides insight into the mechanisms of isoprenoid pathway decarboxylases.</title>
        <authorList>
            <person name="Vinokur J.M."/>
            <person name="Korman T.P."/>
            <person name="Sawaya M.R."/>
            <person name="Collazo M."/>
            <person name="Cascio D."/>
            <person name="Bowie J.U."/>
        </authorList>
    </citation>
    <scope>X-RAY CRYSTALLOGRAPHY (2.00 ANGSTROMS) IN COMPLEX WITH SUBSTRATE AND ATP ANALOG</scope>
    <scope>BIOPHYSICOCHEMICAL PROPERTIES</scope>
    <scope>MUTAGENESIS OF LEU-18; SER-105 AND ARG-185</scope>
    <scope>SUBUNIT</scope>
</reference>
<evidence type="ECO:0000269" key="1">
    <source>
    </source>
</evidence>
<evidence type="ECO:0000269" key="2">
    <source>
    </source>
</evidence>
<evidence type="ECO:0000269" key="3">
    <source>
    </source>
</evidence>
<evidence type="ECO:0000303" key="4">
    <source>
    </source>
</evidence>
<evidence type="ECO:0000303" key="5">
    <source>
    </source>
</evidence>
<evidence type="ECO:0000305" key="6"/>
<evidence type="ECO:0000312" key="7">
    <source>
        <dbReference type="EMBL" id="CAC12426.1"/>
    </source>
</evidence>
<evidence type="ECO:0007744" key="8">
    <source>
        <dbReference type="PDB" id="4RKP"/>
    </source>
</evidence>
<evidence type="ECO:0007744" key="9">
    <source>
        <dbReference type="PDB" id="4RKS"/>
    </source>
</evidence>
<evidence type="ECO:0007744" key="10">
    <source>
        <dbReference type="PDB" id="4RKZ"/>
    </source>
</evidence>
<evidence type="ECO:0007829" key="11">
    <source>
        <dbReference type="PDB" id="4RKS"/>
    </source>
</evidence>
<organism>
    <name type="scientific">Thermoplasma acidophilum (strain ATCC 25905 / DSM 1728 / JCM 9062 / NBRC 15155 / AMRC-C165)</name>
    <dbReference type="NCBI Taxonomy" id="273075"/>
    <lineage>
        <taxon>Archaea</taxon>
        <taxon>Methanobacteriati</taxon>
        <taxon>Thermoplasmatota</taxon>
        <taxon>Thermoplasmata</taxon>
        <taxon>Thermoplasmatales</taxon>
        <taxon>Thermoplasmataceae</taxon>
        <taxon>Thermoplasma</taxon>
    </lineage>
</organism>
<dbReference type="EC" id="2.7.1.185" evidence="1 2"/>
<dbReference type="EMBL" id="AL445067">
    <property type="protein sequence ID" value="CAC12426.1"/>
    <property type="molecule type" value="Genomic_DNA"/>
</dbReference>
<dbReference type="RefSeq" id="WP_010901711.1">
    <property type="nucleotide sequence ID" value="NC_002578.1"/>
</dbReference>
<dbReference type="PDB" id="4RKP">
    <property type="method" value="X-ray"/>
    <property type="resolution" value="2.10 A"/>
    <property type="chains" value="A/B=1-318"/>
</dbReference>
<dbReference type="PDB" id="4RKS">
    <property type="method" value="X-ray"/>
    <property type="resolution" value="2.00 A"/>
    <property type="chains" value="A/B=1-318"/>
</dbReference>
<dbReference type="PDB" id="4RKZ">
    <property type="method" value="X-ray"/>
    <property type="resolution" value="2.30 A"/>
    <property type="chains" value="A/B=1-318"/>
</dbReference>
<dbReference type="PDBsum" id="4RKP"/>
<dbReference type="PDBsum" id="4RKS"/>
<dbReference type="PDBsum" id="4RKZ"/>
<dbReference type="SMR" id="Q9HIN1"/>
<dbReference type="STRING" id="273075.gene:9572528"/>
<dbReference type="PaxDb" id="273075-Ta1305"/>
<dbReference type="EnsemblBacteria" id="CAC12426">
    <property type="protein sequence ID" value="CAC12426"/>
    <property type="gene ID" value="CAC12426"/>
</dbReference>
<dbReference type="KEGG" id="tac:Ta1305"/>
<dbReference type="eggNOG" id="arCOG02937">
    <property type="taxonomic scope" value="Archaea"/>
</dbReference>
<dbReference type="HOGENOM" id="CLU_862228_0_0_2"/>
<dbReference type="InParanoid" id="Q9HIN1"/>
<dbReference type="OrthoDB" id="275333at2157"/>
<dbReference type="BioCyc" id="MetaCyc:MONOMER-18735"/>
<dbReference type="BRENDA" id="2.7.1.185">
    <property type="organism ID" value="6324"/>
</dbReference>
<dbReference type="UniPathway" id="UPA00057"/>
<dbReference type="EvolutionaryTrace" id="Q9HIN1"/>
<dbReference type="Proteomes" id="UP000001024">
    <property type="component" value="Chromosome"/>
</dbReference>
<dbReference type="GO" id="GO:0005524">
    <property type="term" value="F:ATP binding"/>
    <property type="evidence" value="ECO:0007669"/>
    <property type="project" value="UniProtKB-KW"/>
</dbReference>
<dbReference type="GO" id="GO:0016301">
    <property type="term" value="F:kinase activity"/>
    <property type="evidence" value="ECO:0007669"/>
    <property type="project" value="UniProtKB-KW"/>
</dbReference>
<dbReference type="GO" id="GO:0016773">
    <property type="term" value="F:phosphotransferase activity, alcohol group as acceptor"/>
    <property type="evidence" value="ECO:0000314"/>
    <property type="project" value="UniProtKB"/>
</dbReference>
<dbReference type="GO" id="GO:0019287">
    <property type="term" value="P:isopentenyl diphosphate biosynthetic process, mevalonate pathway"/>
    <property type="evidence" value="ECO:0000314"/>
    <property type="project" value="UniProtKB"/>
</dbReference>
<dbReference type="Gene3D" id="3.30.230.10">
    <property type="match status" value="1"/>
</dbReference>
<dbReference type="Gene3D" id="3.30.70.890">
    <property type="entry name" value="GHMP kinase, C-terminal domain"/>
    <property type="match status" value="1"/>
</dbReference>
<dbReference type="InterPro" id="IPR036554">
    <property type="entry name" value="GHMP_kinase_C_sf"/>
</dbReference>
<dbReference type="InterPro" id="IPR048471">
    <property type="entry name" value="M3K"/>
</dbReference>
<dbReference type="InterPro" id="IPR048470">
    <property type="entry name" value="M3K_C"/>
</dbReference>
<dbReference type="InterPro" id="IPR053859">
    <property type="entry name" value="MVD-like_N"/>
</dbReference>
<dbReference type="InterPro" id="IPR020568">
    <property type="entry name" value="Ribosomal_Su5_D2-typ_SF"/>
</dbReference>
<dbReference type="InterPro" id="IPR014721">
    <property type="entry name" value="Ribsml_uS5_D2-typ_fold_subgr"/>
</dbReference>
<dbReference type="NCBIfam" id="NF040848">
    <property type="entry name" value="mev_kinase"/>
    <property type="match status" value="1"/>
</dbReference>
<dbReference type="Pfam" id="PF21433">
    <property type="entry name" value="M3K_C"/>
    <property type="match status" value="1"/>
</dbReference>
<dbReference type="Pfam" id="PF22700">
    <property type="entry name" value="MVD-like_N"/>
    <property type="match status" value="1"/>
</dbReference>
<dbReference type="SUPFAM" id="SSF55060">
    <property type="entry name" value="GHMP Kinase, C-terminal domain"/>
    <property type="match status" value="1"/>
</dbReference>
<dbReference type="SUPFAM" id="SSF54211">
    <property type="entry name" value="Ribosomal protein S5 domain 2-like"/>
    <property type="match status" value="1"/>
</dbReference>
<gene>
    <name evidence="7" type="ordered locus">Ta1305</name>
</gene>
<keyword id="KW-0002">3D-structure</keyword>
<keyword id="KW-0067">ATP-binding</keyword>
<keyword id="KW-0414">Isoprene biosynthesis</keyword>
<keyword id="KW-0418">Kinase</keyword>
<keyword id="KW-0444">Lipid biosynthesis</keyword>
<keyword id="KW-0443">Lipid metabolism</keyword>
<keyword id="KW-0547">Nucleotide-binding</keyword>
<keyword id="KW-1185">Reference proteome</keyword>
<keyword id="KW-0808">Transferase</keyword>
<comment type="function">
    <text evidence="1 2">Catalyzes the phosphorylation of mevalonate (MVA) to yield mevalonate-3-phosphate. Functions in an alternative mevalonate pathway, only present in extreme acidophiles of the Thermoplasmatales order, which passes through mevalonate 3-phosphate rather than mevalonate 5-phosphate.</text>
</comment>
<comment type="catalytic activity">
    <reaction evidence="1 2">
        <text>(R)-mevalonate + ATP = (R)-3-phosphomevalonate + ADP + H(+)</text>
        <dbReference type="Rhea" id="RHEA:42884"/>
        <dbReference type="ChEBI" id="CHEBI:15378"/>
        <dbReference type="ChEBI" id="CHEBI:30616"/>
        <dbReference type="ChEBI" id="CHEBI:36464"/>
        <dbReference type="ChEBI" id="CHEBI:82773"/>
        <dbReference type="ChEBI" id="CHEBI:456216"/>
        <dbReference type="EC" id="2.7.1.185"/>
    </reaction>
</comment>
<comment type="biophysicochemical properties">
    <kinetics>
        <KM evidence="2">97 uM for (R)-mevalonate</KM>
        <KM evidence="3">130 uM for ATP</KM>
        <text evidence="2 3">kcat is 5.3 sec(-1) for ATP as substrate (PubMed:25422158). kcat is 5 sec(-1) for (R)-mevalonate as substrate (PubMed:24914732).</text>
    </kinetics>
    <phDependence>
        <text evidence="2">Optimum pH is 8.5.</text>
    </phDependence>
    <temperatureDependence>
        <text evidence="2">Optimum temperature is 55 degrees Celsius.</text>
    </temperatureDependence>
</comment>
<comment type="pathway">
    <text evidence="1 2">Isoprenoid biosynthesis; isopentenyl diphosphate biosynthesis via mevalonate pathway.</text>
</comment>
<comment type="subunit">
    <text evidence="3">Homodimer.</text>
</comment>
<comment type="similarity">
    <text evidence="6">Belongs to the GHMP kinase family.</text>
</comment>
<protein>
    <recommendedName>
        <fullName evidence="5">Mevalonate 3-kinase</fullName>
        <shortName evidence="5">M3K</shortName>
        <ecNumber evidence="1 2">2.7.1.185</ecNumber>
    </recommendedName>
    <alternativeName>
        <fullName evidence="4">ATP:(R)-mevalonate 3-phosphotransferase</fullName>
        <shortName evidence="4">ATP:(R)-MVA 3 phosphotransferase</shortName>
    </alternativeName>
</protein>
<name>MV3K_THEAC</name>
<feature type="chain" id="PRO_0000431278" description="Mevalonate 3-kinase">
    <location>
        <begin position="1"/>
        <end position="318"/>
    </location>
</feature>
<feature type="binding site" evidence="3 9">
    <location>
        <position position="19"/>
    </location>
    <ligand>
        <name>substrate</name>
    </ligand>
</feature>
<feature type="binding site" evidence="3 10">
    <location>
        <begin position="96"/>
        <end position="100"/>
    </location>
    <ligand>
        <name>ATP</name>
        <dbReference type="ChEBI" id="CHEBI:30616"/>
    </ligand>
</feature>
<feature type="binding site" evidence="3 8 10">
    <location>
        <begin position="105"/>
        <end position="108"/>
    </location>
    <ligand>
        <name>ATP</name>
        <dbReference type="ChEBI" id="CHEBI:30616"/>
    </ligand>
</feature>
<feature type="binding site" evidence="3 9">
    <location>
        <position position="140"/>
    </location>
    <ligand>
        <name>substrate</name>
    </ligand>
</feature>
<feature type="binding site" evidence="3 9">
    <location>
        <position position="144"/>
    </location>
    <ligand>
        <name>substrate</name>
    </ligand>
</feature>
<feature type="binding site" evidence="3 10">
    <location>
        <position position="185"/>
    </location>
    <ligand>
        <name>ATP</name>
        <dbReference type="ChEBI" id="CHEBI:30616"/>
    </ligand>
</feature>
<feature type="binding site" evidence="3 8 10">
    <location>
        <position position="188"/>
    </location>
    <ligand>
        <name>ATP</name>
        <dbReference type="ChEBI" id="CHEBI:30616"/>
    </ligand>
</feature>
<feature type="mutagenesis site" description="Strong decrease of the affinity for ATP, but almost the same catalytic efficiency compared to the wild-type." evidence="3">
    <original>L</original>
    <variation>A</variation>
    <location>
        <position position="18"/>
    </location>
</feature>
<feature type="mutagenesis site" description="4.6-fold decrease in the catalytic efficiency for ATP, with only a marginal decrease in affinity compared to the wild-type." evidence="3">
    <original>S</original>
    <variation>A</variation>
    <location>
        <position position="105"/>
    </location>
</feature>
<feature type="mutagenesis site" description="Loss of kinase activity." evidence="3">
    <original>R</original>
    <variation>A</variation>
    <location>
        <position position="185"/>
    </location>
</feature>
<feature type="mutagenesis site" description="Strong decrease of the affinity for ATP and 17-fold decrease of the catalytic efficiency compared to the wild-type." evidence="3">
    <original>R</original>
    <variation>K</variation>
    <location>
        <position position="185"/>
    </location>
</feature>
<feature type="strand" evidence="11">
    <location>
        <begin position="4"/>
        <end position="10"/>
    </location>
</feature>
<feature type="strand" evidence="11">
    <location>
        <begin position="13"/>
        <end position="17"/>
    </location>
</feature>
<feature type="turn" evidence="11">
    <location>
        <begin position="25"/>
        <end position="27"/>
    </location>
</feature>
<feature type="strand" evidence="11">
    <location>
        <begin position="30"/>
        <end position="32"/>
    </location>
</feature>
<feature type="strand" evidence="11">
    <location>
        <begin position="34"/>
        <end position="40"/>
    </location>
</feature>
<feature type="strand" evidence="11">
    <location>
        <begin position="46"/>
        <end position="54"/>
    </location>
</feature>
<feature type="strand" evidence="11">
    <location>
        <begin position="60"/>
        <end position="62"/>
    </location>
</feature>
<feature type="strand" evidence="11">
    <location>
        <begin position="65"/>
        <end position="67"/>
    </location>
</feature>
<feature type="helix" evidence="11">
    <location>
        <begin position="73"/>
        <end position="80"/>
    </location>
</feature>
<feature type="helix" evidence="11">
    <location>
        <begin position="82"/>
        <end position="89"/>
    </location>
</feature>
<feature type="strand" evidence="11">
    <location>
        <begin position="94"/>
        <end position="103"/>
    </location>
</feature>
<feature type="helix" evidence="11">
    <location>
        <begin position="109"/>
        <end position="122"/>
    </location>
</feature>
<feature type="helix" evidence="11">
    <location>
        <begin position="128"/>
        <end position="135"/>
    </location>
</feature>
<feature type="turn" evidence="11">
    <location>
        <begin position="136"/>
        <end position="138"/>
    </location>
</feature>
<feature type="helix" evidence="11">
    <location>
        <begin position="142"/>
        <end position="147"/>
    </location>
</feature>
<feature type="strand" evidence="11">
    <location>
        <begin position="148"/>
        <end position="155"/>
    </location>
</feature>
<feature type="strand" evidence="11">
    <location>
        <begin position="160"/>
        <end position="166"/>
    </location>
</feature>
<feature type="helix" evidence="11">
    <location>
        <begin position="168"/>
        <end position="171"/>
    </location>
</feature>
<feature type="strand" evidence="11">
    <location>
        <begin position="174"/>
        <end position="180"/>
    </location>
</feature>
<feature type="helix" evidence="11">
    <location>
        <begin position="188"/>
        <end position="195"/>
    </location>
</feature>
<feature type="helix" evidence="11">
    <location>
        <begin position="201"/>
        <end position="219"/>
    </location>
</feature>
<feature type="turn" evidence="11">
    <location>
        <begin position="220"/>
        <end position="222"/>
    </location>
</feature>
<feature type="helix" evidence="11">
    <location>
        <begin position="224"/>
        <end position="243"/>
    </location>
</feature>
<feature type="turn" evidence="11">
    <location>
        <begin position="244"/>
        <end position="246"/>
    </location>
</feature>
<feature type="helix" evidence="11">
    <location>
        <begin position="252"/>
        <end position="264"/>
    </location>
</feature>
<feature type="turn" evidence="11">
    <location>
        <begin position="265"/>
        <end position="267"/>
    </location>
</feature>
<feature type="strand" evidence="11">
    <location>
        <begin position="270"/>
        <end position="273"/>
    </location>
</feature>
<feature type="strand" evidence="11">
    <location>
        <begin position="276"/>
        <end position="285"/>
    </location>
</feature>
<feature type="helix" evidence="11">
    <location>
        <begin position="286"/>
        <end position="288"/>
    </location>
</feature>
<feature type="helix" evidence="11">
    <location>
        <begin position="289"/>
        <end position="293"/>
    </location>
</feature>
<feature type="strand" evidence="11">
    <location>
        <begin position="302"/>
        <end position="308"/>
    </location>
</feature>
<proteinExistence type="evidence at protein level"/>
<sequence length="318" mass="35201">MTYRSIGSTAYPTIGVVLLGGIANPVTRTPLHTSAGIAYSDSCGSIRSETRIYADEATHIYFNGTESTDDNRSVRRVLDRYSSVFEEAFGTKTVSYSSQNFGILSGSSDAGAASIGAAILGLKPDLDPHDVENDLRAVSESAGRSLFGGLTITWSDGFHAYTEKILDPEAFSGYSIVAFAFDYQRNPSDVIHQNIVRSDLYPARKKHADEHAHMIKEYAKTNDIKGIFDLAQEDTEEYHSILRGVGVNVIRENMQKLISYLKLIRKDYWNAYIVTGGSNVYVAVESENADRLFSIENTFGSKKKMLRIVGGAWHRRPE</sequence>
<accession>Q9HIN1</accession>